<sequence length="102" mass="11643">MDSSKIRIRLKSYDYRMLDISAAEIVETARRTGARVCGPIPLPTKIERFTVLRSPHVDKNARDQFEQRTHKRLLDILDPNDKTVDALIKLDLAAGVDVEIKL</sequence>
<name>RS10_ACIF2</name>
<comment type="function">
    <text evidence="1">Involved in the binding of tRNA to the ribosomes.</text>
</comment>
<comment type="subunit">
    <text evidence="1">Part of the 30S ribosomal subunit.</text>
</comment>
<comment type="similarity">
    <text evidence="1">Belongs to the universal ribosomal protein uS10 family.</text>
</comment>
<feature type="chain" id="PRO_1000127068" description="Small ribosomal subunit protein uS10">
    <location>
        <begin position="1"/>
        <end position="102"/>
    </location>
</feature>
<reference key="1">
    <citation type="journal article" date="2008" name="BMC Genomics">
        <title>Acidithiobacillus ferrooxidans metabolism: from genome sequence to industrial applications.</title>
        <authorList>
            <person name="Valdes J."/>
            <person name="Pedroso I."/>
            <person name="Quatrini R."/>
            <person name="Dodson R.J."/>
            <person name="Tettelin H."/>
            <person name="Blake R. II"/>
            <person name="Eisen J.A."/>
            <person name="Holmes D.S."/>
        </authorList>
    </citation>
    <scope>NUCLEOTIDE SEQUENCE [LARGE SCALE GENOMIC DNA]</scope>
    <source>
        <strain>ATCC 23270 / DSM 14882 / CIP 104768 / NCIMB 8455</strain>
    </source>
</reference>
<keyword id="KW-1185">Reference proteome</keyword>
<keyword id="KW-0687">Ribonucleoprotein</keyword>
<keyword id="KW-0689">Ribosomal protein</keyword>
<evidence type="ECO:0000255" key="1">
    <source>
        <dbReference type="HAMAP-Rule" id="MF_00508"/>
    </source>
</evidence>
<evidence type="ECO:0000305" key="2"/>
<organism>
    <name type="scientific">Acidithiobacillus ferrooxidans (strain ATCC 23270 / DSM 14882 / CIP 104768 / NCIMB 8455)</name>
    <name type="common">Ferrobacillus ferrooxidans (strain ATCC 23270)</name>
    <dbReference type="NCBI Taxonomy" id="243159"/>
    <lineage>
        <taxon>Bacteria</taxon>
        <taxon>Pseudomonadati</taxon>
        <taxon>Pseudomonadota</taxon>
        <taxon>Acidithiobacillia</taxon>
        <taxon>Acidithiobacillales</taxon>
        <taxon>Acidithiobacillaceae</taxon>
        <taxon>Acidithiobacillus</taxon>
    </lineage>
</organism>
<gene>
    <name evidence="1" type="primary">rpsJ</name>
    <name type="ordered locus">AFE_0326</name>
</gene>
<dbReference type="EMBL" id="CP001219">
    <property type="protein sequence ID" value="ACK79390.1"/>
    <property type="molecule type" value="Genomic_DNA"/>
</dbReference>
<dbReference type="RefSeq" id="WP_012536086.1">
    <property type="nucleotide sequence ID" value="NC_011761.1"/>
</dbReference>
<dbReference type="SMR" id="B7J466"/>
<dbReference type="STRING" id="243159.AFE_0326"/>
<dbReference type="PaxDb" id="243159-AFE_0326"/>
<dbReference type="GeneID" id="65279705"/>
<dbReference type="KEGG" id="afr:AFE_0326"/>
<dbReference type="eggNOG" id="COG0051">
    <property type="taxonomic scope" value="Bacteria"/>
</dbReference>
<dbReference type="HOGENOM" id="CLU_122625_1_3_6"/>
<dbReference type="Proteomes" id="UP000001362">
    <property type="component" value="Chromosome"/>
</dbReference>
<dbReference type="GO" id="GO:1990904">
    <property type="term" value="C:ribonucleoprotein complex"/>
    <property type="evidence" value="ECO:0007669"/>
    <property type="project" value="UniProtKB-KW"/>
</dbReference>
<dbReference type="GO" id="GO:0005840">
    <property type="term" value="C:ribosome"/>
    <property type="evidence" value="ECO:0007669"/>
    <property type="project" value="UniProtKB-KW"/>
</dbReference>
<dbReference type="GO" id="GO:0003735">
    <property type="term" value="F:structural constituent of ribosome"/>
    <property type="evidence" value="ECO:0007669"/>
    <property type="project" value="InterPro"/>
</dbReference>
<dbReference type="GO" id="GO:0000049">
    <property type="term" value="F:tRNA binding"/>
    <property type="evidence" value="ECO:0007669"/>
    <property type="project" value="UniProtKB-UniRule"/>
</dbReference>
<dbReference type="GO" id="GO:0006412">
    <property type="term" value="P:translation"/>
    <property type="evidence" value="ECO:0007669"/>
    <property type="project" value="UniProtKB-UniRule"/>
</dbReference>
<dbReference type="FunFam" id="3.30.70.600:FF:000001">
    <property type="entry name" value="30S ribosomal protein S10"/>
    <property type="match status" value="1"/>
</dbReference>
<dbReference type="Gene3D" id="3.30.70.600">
    <property type="entry name" value="Ribosomal protein S10 domain"/>
    <property type="match status" value="1"/>
</dbReference>
<dbReference type="HAMAP" id="MF_00508">
    <property type="entry name" value="Ribosomal_uS10"/>
    <property type="match status" value="1"/>
</dbReference>
<dbReference type="InterPro" id="IPR001848">
    <property type="entry name" value="Ribosomal_uS10"/>
</dbReference>
<dbReference type="InterPro" id="IPR018268">
    <property type="entry name" value="Ribosomal_uS10_CS"/>
</dbReference>
<dbReference type="InterPro" id="IPR027486">
    <property type="entry name" value="Ribosomal_uS10_dom"/>
</dbReference>
<dbReference type="InterPro" id="IPR036838">
    <property type="entry name" value="Ribosomal_uS10_dom_sf"/>
</dbReference>
<dbReference type="NCBIfam" id="NF001861">
    <property type="entry name" value="PRK00596.1"/>
    <property type="match status" value="1"/>
</dbReference>
<dbReference type="NCBIfam" id="TIGR01049">
    <property type="entry name" value="rpsJ_bact"/>
    <property type="match status" value="1"/>
</dbReference>
<dbReference type="PANTHER" id="PTHR11700">
    <property type="entry name" value="30S RIBOSOMAL PROTEIN S10 FAMILY MEMBER"/>
    <property type="match status" value="1"/>
</dbReference>
<dbReference type="Pfam" id="PF00338">
    <property type="entry name" value="Ribosomal_S10"/>
    <property type="match status" value="1"/>
</dbReference>
<dbReference type="PRINTS" id="PR00971">
    <property type="entry name" value="RIBOSOMALS10"/>
</dbReference>
<dbReference type="SMART" id="SM01403">
    <property type="entry name" value="Ribosomal_S10"/>
    <property type="match status" value="1"/>
</dbReference>
<dbReference type="SUPFAM" id="SSF54999">
    <property type="entry name" value="Ribosomal protein S10"/>
    <property type="match status" value="1"/>
</dbReference>
<dbReference type="PROSITE" id="PS00361">
    <property type="entry name" value="RIBOSOMAL_S10"/>
    <property type="match status" value="1"/>
</dbReference>
<proteinExistence type="inferred from homology"/>
<accession>B7J466</accession>
<protein>
    <recommendedName>
        <fullName evidence="1">Small ribosomal subunit protein uS10</fullName>
    </recommendedName>
    <alternativeName>
        <fullName evidence="2">30S ribosomal protein S10</fullName>
    </alternativeName>
</protein>